<feature type="chain" id="PRO_1000127395" description="Large ribosomal subunit protein bL35">
    <location>
        <begin position="1"/>
        <end position="64"/>
    </location>
</feature>
<keyword id="KW-0687">Ribonucleoprotein</keyword>
<keyword id="KW-0689">Ribosomal protein</keyword>
<dbReference type="EMBL" id="CP000949">
    <property type="protein sequence ID" value="ACA72472.1"/>
    <property type="molecule type" value="Genomic_DNA"/>
</dbReference>
<dbReference type="SMR" id="B1J6U6"/>
<dbReference type="STRING" id="390235.PputW619_1969"/>
<dbReference type="KEGG" id="ppw:PputW619_1969"/>
<dbReference type="eggNOG" id="COG0291">
    <property type="taxonomic scope" value="Bacteria"/>
</dbReference>
<dbReference type="HOGENOM" id="CLU_169643_1_1_6"/>
<dbReference type="OrthoDB" id="47476at2"/>
<dbReference type="GO" id="GO:0022625">
    <property type="term" value="C:cytosolic large ribosomal subunit"/>
    <property type="evidence" value="ECO:0007669"/>
    <property type="project" value="TreeGrafter"/>
</dbReference>
<dbReference type="GO" id="GO:0003735">
    <property type="term" value="F:structural constituent of ribosome"/>
    <property type="evidence" value="ECO:0007669"/>
    <property type="project" value="InterPro"/>
</dbReference>
<dbReference type="GO" id="GO:0006412">
    <property type="term" value="P:translation"/>
    <property type="evidence" value="ECO:0007669"/>
    <property type="project" value="UniProtKB-UniRule"/>
</dbReference>
<dbReference type="FunFam" id="4.10.410.60:FF:000001">
    <property type="entry name" value="50S ribosomal protein L35"/>
    <property type="match status" value="1"/>
</dbReference>
<dbReference type="Gene3D" id="4.10.410.60">
    <property type="match status" value="1"/>
</dbReference>
<dbReference type="HAMAP" id="MF_00514">
    <property type="entry name" value="Ribosomal_bL35"/>
    <property type="match status" value="1"/>
</dbReference>
<dbReference type="InterPro" id="IPR001706">
    <property type="entry name" value="Ribosomal_bL35"/>
</dbReference>
<dbReference type="InterPro" id="IPR021137">
    <property type="entry name" value="Ribosomal_bL35-like"/>
</dbReference>
<dbReference type="InterPro" id="IPR018265">
    <property type="entry name" value="Ribosomal_bL35_CS"/>
</dbReference>
<dbReference type="InterPro" id="IPR037229">
    <property type="entry name" value="Ribosomal_bL35_sf"/>
</dbReference>
<dbReference type="NCBIfam" id="TIGR00001">
    <property type="entry name" value="rpmI_bact"/>
    <property type="match status" value="1"/>
</dbReference>
<dbReference type="PANTHER" id="PTHR33343">
    <property type="entry name" value="54S RIBOSOMAL PROTEIN BL35M"/>
    <property type="match status" value="1"/>
</dbReference>
<dbReference type="PANTHER" id="PTHR33343:SF1">
    <property type="entry name" value="LARGE RIBOSOMAL SUBUNIT PROTEIN BL35M"/>
    <property type="match status" value="1"/>
</dbReference>
<dbReference type="Pfam" id="PF01632">
    <property type="entry name" value="Ribosomal_L35p"/>
    <property type="match status" value="1"/>
</dbReference>
<dbReference type="PRINTS" id="PR00064">
    <property type="entry name" value="RIBOSOMALL35"/>
</dbReference>
<dbReference type="SUPFAM" id="SSF143034">
    <property type="entry name" value="L35p-like"/>
    <property type="match status" value="1"/>
</dbReference>
<dbReference type="PROSITE" id="PS00936">
    <property type="entry name" value="RIBOSOMAL_L35"/>
    <property type="match status" value="1"/>
</dbReference>
<sequence>MPKMKTKSGAAKRFLKTATGFKHKHAFKSHILTKMSTKRKRQLRGSSLLHPSDVAKVARMLRVR</sequence>
<accession>B1J6U6</accession>
<protein>
    <recommendedName>
        <fullName evidence="1">Large ribosomal subunit protein bL35</fullName>
    </recommendedName>
    <alternativeName>
        <fullName evidence="2">50S ribosomal protein L35</fullName>
    </alternativeName>
</protein>
<reference key="1">
    <citation type="submission" date="2008-02" db="EMBL/GenBank/DDBJ databases">
        <title>Complete sequence of Pseudomonas putida W619.</title>
        <authorList>
            <person name="Copeland A."/>
            <person name="Lucas S."/>
            <person name="Lapidus A."/>
            <person name="Barry K."/>
            <person name="Detter J.C."/>
            <person name="Glavina del Rio T."/>
            <person name="Dalin E."/>
            <person name="Tice H."/>
            <person name="Pitluck S."/>
            <person name="Chain P."/>
            <person name="Malfatti S."/>
            <person name="Shin M."/>
            <person name="Vergez L."/>
            <person name="Schmutz J."/>
            <person name="Larimer F."/>
            <person name="Land M."/>
            <person name="Hauser L."/>
            <person name="Kyrpides N."/>
            <person name="Kim E."/>
            <person name="Taghavi S."/>
            <person name="Vangronsveld D."/>
            <person name="van der Lelie D."/>
            <person name="Richardson P."/>
        </authorList>
    </citation>
    <scope>NUCLEOTIDE SEQUENCE [LARGE SCALE GENOMIC DNA]</scope>
    <source>
        <strain>W619</strain>
    </source>
</reference>
<evidence type="ECO:0000255" key="1">
    <source>
        <dbReference type="HAMAP-Rule" id="MF_00514"/>
    </source>
</evidence>
<evidence type="ECO:0000305" key="2"/>
<proteinExistence type="inferred from homology"/>
<gene>
    <name evidence="1" type="primary">rpmI</name>
    <name type="ordered locus">PputW619_1969</name>
</gene>
<organism>
    <name type="scientific">Pseudomonas putida (strain W619)</name>
    <dbReference type="NCBI Taxonomy" id="390235"/>
    <lineage>
        <taxon>Bacteria</taxon>
        <taxon>Pseudomonadati</taxon>
        <taxon>Pseudomonadota</taxon>
        <taxon>Gammaproteobacteria</taxon>
        <taxon>Pseudomonadales</taxon>
        <taxon>Pseudomonadaceae</taxon>
        <taxon>Pseudomonas</taxon>
    </lineage>
</organism>
<comment type="similarity">
    <text evidence="1">Belongs to the bacterial ribosomal protein bL35 family.</text>
</comment>
<name>RL35_PSEPW</name>